<gene>
    <name evidence="1" type="primary">lysS</name>
    <name type="ordered locus">CA_C3197</name>
</gene>
<accession>Q97EB7</accession>
<dbReference type="EC" id="6.1.1.6" evidence="1"/>
<dbReference type="EMBL" id="AE001437">
    <property type="protein sequence ID" value="AAK81133.1"/>
    <property type="molecule type" value="Genomic_DNA"/>
</dbReference>
<dbReference type="PIR" id="B97293">
    <property type="entry name" value="B97293"/>
</dbReference>
<dbReference type="RefSeq" id="NP_349793.1">
    <property type="nucleotide sequence ID" value="NC_003030.1"/>
</dbReference>
<dbReference type="RefSeq" id="WP_010966473.1">
    <property type="nucleotide sequence ID" value="NC_003030.1"/>
</dbReference>
<dbReference type="SMR" id="Q97EB7"/>
<dbReference type="STRING" id="272562.CA_C3197"/>
<dbReference type="GeneID" id="44999690"/>
<dbReference type="KEGG" id="cac:CA_C3197"/>
<dbReference type="PATRIC" id="fig|272562.8.peg.3376"/>
<dbReference type="eggNOG" id="COG1190">
    <property type="taxonomic scope" value="Bacteria"/>
</dbReference>
<dbReference type="HOGENOM" id="CLU_008255_6_0_9"/>
<dbReference type="OrthoDB" id="9801152at2"/>
<dbReference type="Proteomes" id="UP000000814">
    <property type="component" value="Chromosome"/>
</dbReference>
<dbReference type="GO" id="GO:0005829">
    <property type="term" value="C:cytosol"/>
    <property type="evidence" value="ECO:0007669"/>
    <property type="project" value="TreeGrafter"/>
</dbReference>
<dbReference type="GO" id="GO:0005524">
    <property type="term" value="F:ATP binding"/>
    <property type="evidence" value="ECO:0007669"/>
    <property type="project" value="UniProtKB-UniRule"/>
</dbReference>
<dbReference type="GO" id="GO:0140096">
    <property type="term" value="F:catalytic activity, acting on a protein"/>
    <property type="evidence" value="ECO:0007669"/>
    <property type="project" value="UniProtKB-ARBA"/>
</dbReference>
<dbReference type="GO" id="GO:0004824">
    <property type="term" value="F:lysine-tRNA ligase activity"/>
    <property type="evidence" value="ECO:0007669"/>
    <property type="project" value="UniProtKB-UniRule"/>
</dbReference>
<dbReference type="GO" id="GO:0000287">
    <property type="term" value="F:magnesium ion binding"/>
    <property type="evidence" value="ECO:0007669"/>
    <property type="project" value="UniProtKB-UniRule"/>
</dbReference>
<dbReference type="GO" id="GO:0016740">
    <property type="term" value="F:transferase activity"/>
    <property type="evidence" value="ECO:0007669"/>
    <property type="project" value="UniProtKB-ARBA"/>
</dbReference>
<dbReference type="GO" id="GO:0000049">
    <property type="term" value="F:tRNA binding"/>
    <property type="evidence" value="ECO:0007669"/>
    <property type="project" value="TreeGrafter"/>
</dbReference>
<dbReference type="GO" id="GO:0006430">
    <property type="term" value="P:lysyl-tRNA aminoacylation"/>
    <property type="evidence" value="ECO:0007669"/>
    <property type="project" value="UniProtKB-UniRule"/>
</dbReference>
<dbReference type="CDD" id="cd00775">
    <property type="entry name" value="LysRS_core"/>
    <property type="match status" value="1"/>
</dbReference>
<dbReference type="CDD" id="cd04322">
    <property type="entry name" value="LysRS_N"/>
    <property type="match status" value="1"/>
</dbReference>
<dbReference type="FunFam" id="2.40.50.140:FF:000024">
    <property type="entry name" value="Lysine--tRNA ligase"/>
    <property type="match status" value="1"/>
</dbReference>
<dbReference type="FunFam" id="3.30.930.10:FF:000001">
    <property type="entry name" value="Lysine--tRNA ligase"/>
    <property type="match status" value="1"/>
</dbReference>
<dbReference type="Gene3D" id="3.30.930.10">
    <property type="entry name" value="Bira Bifunctional Protein, Domain 2"/>
    <property type="match status" value="1"/>
</dbReference>
<dbReference type="Gene3D" id="2.40.50.140">
    <property type="entry name" value="Nucleic acid-binding proteins"/>
    <property type="match status" value="1"/>
</dbReference>
<dbReference type="HAMAP" id="MF_00252">
    <property type="entry name" value="Lys_tRNA_synth_class2"/>
    <property type="match status" value="1"/>
</dbReference>
<dbReference type="InterPro" id="IPR004364">
    <property type="entry name" value="Aa-tRNA-synt_II"/>
</dbReference>
<dbReference type="InterPro" id="IPR006195">
    <property type="entry name" value="aa-tRNA-synth_II"/>
</dbReference>
<dbReference type="InterPro" id="IPR045864">
    <property type="entry name" value="aa-tRNA-synth_II/BPL/LPL"/>
</dbReference>
<dbReference type="InterPro" id="IPR002313">
    <property type="entry name" value="Lys-tRNA-ligase_II"/>
</dbReference>
<dbReference type="InterPro" id="IPR034762">
    <property type="entry name" value="Lys-tRNA-ligase_II_bac/euk"/>
</dbReference>
<dbReference type="InterPro" id="IPR044136">
    <property type="entry name" value="Lys-tRNA-ligase_II_N"/>
</dbReference>
<dbReference type="InterPro" id="IPR018149">
    <property type="entry name" value="Lys-tRNA-synth_II_C"/>
</dbReference>
<dbReference type="InterPro" id="IPR012340">
    <property type="entry name" value="NA-bd_OB-fold"/>
</dbReference>
<dbReference type="InterPro" id="IPR004365">
    <property type="entry name" value="NA-bd_OB_tRNA"/>
</dbReference>
<dbReference type="NCBIfam" id="TIGR00499">
    <property type="entry name" value="lysS_bact"/>
    <property type="match status" value="1"/>
</dbReference>
<dbReference type="NCBIfam" id="NF001756">
    <property type="entry name" value="PRK00484.1"/>
    <property type="match status" value="1"/>
</dbReference>
<dbReference type="PANTHER" id="PTHR42918:SF15">
    <property type="entry name" value="LYSINE--TRNA LIGASE, CHLOROPLASTIC_MITOCHONDRIAL"/>
    <property type="match status" value="1"/>
</dbReference>
<dbReference type="PANTHER" id="PTHR42918">
    <property type="entry name" value="LYSYL-TRNA SYNTHETASE"/>
    <property type="match status" value="1"/>
</dbReference>
<dbReference type="Pfam" id="PF00152">
    <property type="entry name" value="tRNA-synt_2"/>
    <property type="match status" value="1"/>
</dbReference>
<dbReference type="Pfam" id="PF01336">
    <property type="entry name" value="tRNA_anti-codon"/>
    <property type="match status" value="1"/>
</dbReference>
<dbReference type="PIRSF" id="PIRSF039101">
    <property type="entry name" value="LysRS2"/>
    <property type="match status" value="1"/>
</dbReference>
<dbReference type="PRINTS" id="PR00982">
    <property type="entry name" value="TRNASYNTHLYS"/>
</dbReference>
<dbReference type="SUPFAM" id="SSF55681">
    <property type="entry name" value="Class II aaRS and biotin synthetases"/>
    <property type="match status" value="1"/>
</dbReference>
<dbReference type="SUPFAM" id="SSF50249">
    <property type="entry name" value="Nucleic acid-binding proteins"/>
    <property type="match status" value="1"/>
</dbReference>
<dbReference type="PROSITE" id="PS50862">
    <property type="entry name" value="AA_TRNA_LIGASE_II"/>
    <property type="match status" value="1"/>
</dbReference>
<name>SYK_CLOAB</name>
<sequence length="515" mass="59604">MSNDEKQLTKEEMKAIKLQAKEEAKMNDLLKERRQKLSDAQERGKDPFDVYKVERTHTSKQIVDNYDELEDKIVTVAGRLMSKRVHGKAGFSDIYDRYGKIQLYLKIDDVGEEKLKEFKTFDIGDFVVITGKVFKTKTGEITLHVTKLELIAKSLKPLPEKFHGLKDPDLKYRQRYVDLIINQDVRETFMKRTAIIKAVREFLDNKDYLEVETPVLSTIASGASARPFSTHHNALDLDMHLRIATELYLKRLIVGGFEKVYEIGKDFRNEGIDVRHNPEFTMIELYEAYADYNDMMEITENMVAYACQKVNGTTKITYEGTEIDLTPPWRRVTMVDIVKEHSGIDFSTVKTDEEAREIAKEKKLELKKELKDCTKGDILNALFEEYGEKKLIQPTFVCDYPVEISPLTKKKRGNPEYTERFEGFIYGREICNAYSELNDPIVQKDRFMQQLKERELGDDEAYQMDDDFINALEIGMPPTGGMGMGMDRLVMFLTDSPSIRDVILFPTMKPTPNRD</sequence>
<protein>
    <recommendedName>
        <fullName evidence="1">Lysine--tRNA ligase</fullName>
        <ecNumber evidence="1">6.1.1.6</ecNumber>
    </recommendedName>
    <alternativeName>
        <fullName evidence="1">Lysyl-tRNA synthetase</fullName>
        <shortName evidence="1">LysRS</shortName>
    </alternativeName>
</protein>
<evidence type="ECO:0000255" key="1">
    <source>
        <dbReference type="HAMAP-Rule" id="MF_00252"/>
    </source>
</evidence>
<comment type="catalytic activity">
    <reaction evidence="1">
        <text>tRNA(Lys) + L-lysine + ATP = L-lysyl-tRNA(Lys) + AMP + diphosphate</text>
        <dbReference type="Rhea" id="RHEA:20792"/>
        <dbReference type="Rhea" id="RHEA-COMP:9696"/>
        <dbReference type="Rhea" id="RHEA-COMP:9697"/>
        <dbReference type="ChEBI" id="CHEBI:30616"/>
        <dbReference type="ChEBI" id="CHEBI:32551"/>
        <dbReference type="ChEBI" id="CHEBI:33019"/>
        <dbReference type="ChEBI" id="CHEBI:78442"/>
        <dbReference type="ChEBI" id="CHEBI:78529"/>
        <dbReference type="ChEBI" id="CHEBI:456215"/>
        <dbReference type="EC" id="6.1.1.6"/>
    </reaction>
</comment>
<comment type="cofactor">
    <cofactor evidence="1">
        <name>Mg(2+)</name>
        <dbReference type="ChEBI" id="CHEBI:18420"/>
    </cofactor>
    <text evidence="1">Binds 3 Mg(2+) ions per subunit.</text>
</comment>
<comment type="subunit">
    <text evidence="1">Homodimer.</text>
</comment>
<comment type="subcellular location">
    <subcellularLocation>
        <location evidence="1">Cytoplasm</location>
    </subcellularLocation>
</comment>
<comment type="similarity">
    <text evidence="1">Belongs to the class-II aminoacyl-tRNA synthetase family.</text>
</comment>
<reference key="1">
    <citation type="journal article" date="2001" name="J. Bacteriol.">
        <title>Genome sequence and comparative analysis of the solvent-producing bacterium Clostridium acetobutylicum.</title>
        <authorList>
            <person name="Noelling J."/>
            <person name="Breton G."/>
            <person name="Omelchenko M.V."/>
            <person name="Makarova K.S."/>
            <person name="Zeng Q."/>
            <person name="Gibson R."/>
            <person name="Lee H.M."/>
            <person name="Dubois J."/>
            <person name="Qiu D."/>
            <person name="Hitti J."/>
            <person name="Wolf Y.I."/>
            <person name="Tatusov R.L."/>
            <person name="Sabathe F."/>
            <person name="Doucette-Stamm L.A."/>
            <person name="Soucaille P."/>
            <person name="Daly M.J."/>
            <person name="Bennett G.N."/>
            <person name="Koonin E.V."/>
            <person name="Smith D.R."/>
        </authorList>
    </citation>
    <scope>NUCLEOTIDE SEQUENCE [LARGE SCALE GENOMIC DNA]</scope>
    <source>
        <strain>ATCC 824 / DSM 792 / JCM 1419 / IAM 19013 / LMG 5710 / NBRC 13948 / NRRL B-527 / VKM B-1787 / 2291 / W</strain>
    </source>
</reference>
<proteinExistence type="inferred from homology"/>
<feature type="chain" id="PRO_0000152617" description="Lysine--tRNA ligase">
    <location>
        <begin position="1"/>
        <end position="515"/>
    </location>
</feature>
<feature type="binding site" evidence="1">
    <location>
        <position position="422"/>
    </location>
    <ligand>
        <name>Mg(2+)</name>
        <dbReference type="ChEBI" id="CHEBI:18420"/>
        <label>1</label>
    </ligand>
</feature>
<feature type="binding site" evidence="1">
    <location>
        <position position="429"/>
    </location>
    <ligand>
        <name>Mg(2+)</name>
        <dbReference type="ChEBI" id="CHEBI:18420"/>
        <label>1</label>
    </ligand>
</feature>
<feature type="binding site" evidence="1">
    <location>
        <position position="429"/>
    </location>
    <ligand>
        <name>Mg(2+)</name>
        <dbReference type="ChEBI" id="CHEBI:18420"/>
        <label>2</label>
    </ligand>
</feature>
<organism>
    <name type="scientific">Clostridium acetobutylicum (strain ATCC 824 / DSM 792 / JCM 1419 / IAM 19013 / LMG 5710 / NBRC 13948 / NRRL B-527 / VKM B-1787 / 2291 / W)</name>
    <dbReference type="NCBI Taxonomy" id="272562"/>
    <lineage>
        <taxon>Bacteria</taxon>
        <taxon>Bacillati</taxon>
        <taxon>Bacillota</taxon>
        <taxon>Clostridia</taxon>
        <taxon>Eubacteriales</taxon>
        <taxon>Clostridiaceae</taxon>
        <taxon>Clostridium</taxon>
    </lineage>
</organism>
<keyword id="KW-0030">Aminoacyl-tRNA synthetase</keyword>
<keyword id="KW-0067">ATP-binding</keyword>
<keyword id="KW-0963">Cytoplasm</keyword>
<keyword id="KW-0436">Ligase</keyword>
<keyword id="KW-0460">Magnesium</keyword>
<keyword id="KW-0479">Metal-binding</keyword>
<keyword id="KW-0547">Nucleotide-binding</keyword>
<keyword id="KW-0648">Protein biosynthesis</keyword>
<keyword id="KW-1185">Reference proteome</keyword>